<gene>
    <name evidence="1" type="primary">clpP1</name>
    <name type="ordered locus">SCO2619</name>
    <name type="ORF">SCC80.04c</name>
</gene>
<dbReference type="EC" id="3.4.21.92" evidence="1"/>
<dbReference type="EMBL" id="AF071885">
    <property type="protein sequence ID" value="AAC70947.1"/>
    <property type="molecule type" value="Genomic_DNA"/>
</dbReference>
<dbReference type="EMBL" id="AL939113">
    <property type="protein sequence ID" value="CAC09995.1"/>
    <property type="molecule type" value="Genomic_DNA"/>
</dbReference>
<dbReference type="RefSeq" id="NP_626855.1">
    <property type="nucleotide sequence ID" value="NC_003888.3"/>
</dbReference>
<dbReference type="SMR" id="Q9F315"/>
<dbReference type="FunCoup" id="Q9F315">
    <property type="interactions" value="380"/>
</dbReference>
<dbReference type="STRING" id="100226.gene:17760223"/>
<dbReference type="MEROPS" id="S14.008"/>
<dbReference type="PaxDb" id="100226-SCO2619"/>
<dbReference type="KEGG" id="sco:SCO2619"/>
<dbReference type="PATRIC" id="fig|100226.15.peg.2665"/>
<dbReference type="eggNOG" id="COG0740">
    <property type="taxonomic scope" value="Bacteria"/>
</dbReference>
<dbReference type="HOGENOM" id="CLU_058707_4_1_11"/>
<dbReference type="InParanoid" id="Q9F315"/>
<dbReference type="OrthoDB" id="9802800at2"/>
<dbReference type="PhylomeDB" id="Q9F315"/>
<dbReference type="Proteomes" id="UP000001973">
    <property type="component" value="Chromosome"/>
</dbReference>
<dbReference type="GO" id="GO:0005737">
    <property type="term" value="C:cytoplasm"/>
    <property type="evidence" value="ECO:0007669"/>
    <property type="project" value="UniProtKB-SubCell"/>
</dbReference>
<dbReference type="GO" id="GO:0009368">
    <property type="term" value="C:endopeptidase Clp complex"/>
    <property type="evidence" value="ECO:0000318"/>
    <property type="project" value="GO_Central"/>
</dbReference>
<dbReference type="GO" id="GO:0004176">
    <property type="term" value="F:ATP-dependent peptidase activity"/>
    <property type="evidence" value="ECO:0000318"/>
    <property type="project" value="GO_Central"/>
</dbReference>
<dbReference type="GO" id="GO:0051117">
    <property type="term" value="F:ATPase binding"/>
    <property type="evidence" value="ECO:0000318"/>
    <property type="project" value="GO_Central"/>
</dbReference>
<dbReference type="GO" id="GO:0004252">
    <property type="term" value="F:serine-type endopeptidase activity"/>
    <property type="evidence" value="ECO:0000318"/>
    <property type="project" value="GO_Central"/>
</dbReference>
<dbReference type="GO" id="GO:0006515">
    <property type="term" value="P:protein quality control for misfolded or incompletely synthesized proteins"/>
    <property type="evidence" value="ECO:0000318"/>
    <property type="project" value="GO_Central"/>
</dbReference>
<dbReference type="CDD" id="cd07017">
    <property type="entry name" value="S14_ClpP_2"/>
    <property type="match status" value="1"/>
</dbReference>
<dbReference type="FunFam" id="3.90.226.10:FF:000002">
    <property type="entry name" value="ATP-dependent Clp protease proteolytic subunit"/>
    <property type="match status" value="1"/>
</dbReference>
<dbReference type="Gene3D" id="3.90.226.10">
    <property type="entry name" value="2-enoyl-CoA Hydratase, Chain A, domain 1"/>
    <property type="match status" value="1"/>
</dbReference>
<dbReference type="HAMAP" id="MF_00444">
    <property type="entry name" value="ClpP"/>
    <property type="match status" value="1"/>
</dbReference>
<dbReference type="InterPro" id="IPR001907">
    <property type="entry name" value="ClpP"/>
</dbReference>
<dbReference type="InterPro" id="IPR029045">
    <property type="entry name" value="ClpP/crotonase-like_dom_sf"/>
</dbReference>
<dbReference type="InterPro" id="IPR023562">
    <property type="entry name" value="ClpP/TepA"/>
</dbReference>
<dbReference type="InterPro" id="IPR033135">
    <property type="entry name" value="ClpP_His_AS"/>
</dbReference>
<dbReference type="NCBIfam" id="NF001368">
    <property type="entry name" value="PRK00277.1"/>
    <property type="match status" value="1"/>
</dbReference>
<dbReference type="NCBIfam" id="NF009205">
    <property type="entry name" value="PRK12553.1"/>
    <property type="match status" value="1"/>
</dbReference>
<dbReference type="PANTHER" id="PTHR10381">
    <property type="entry name" value="ATP-DEPENDENT CLP PROTEASE PROTEOLYTIC SUBUNIT"/>
    <property type="match status" value="1"/>
</dbReference>
<dbReference type="PANTHER" id="PTHR10381:SF70">
    <property type="entry name" value="ATP-DEPENDENT CLP PROTEASE PROTEOLYTIC SUBUNIT"/>
    <property type="match status" value="1"/>
</dbReference>
<dbReference type="Pfam" id="PF00574">
    <property type="entry name" value="CLP_protease"/>
    <property type="match status" value="1"/>
</dbReference>
<dbReference type="PRINTS" id="PR00127">
    <property type="entry name" value="CLPPROTEASEP"/>
</dbReference>
<dbReference type="SUPFAM" id="SSF52096">
    <property type="entry name" value="ClpP/crotonase"/>
    <property type="match status" value="1"/>
</dbReference>
<dbReference type="PROSITE" id="PS00382">
    <property type="entry name" value="CLP_PROTEASE_HIS"/>
    <property type="match status" value="1"/>
</dbReference>
<organism>
    <name type="scientific">Streptomyces coelicolor (strain ATCC BAA-471 / A3(2) / M145)</name>
    <dbReference type="NCBI Taxonomy" id="100226"/>
    <lineage>
        <taxon>Bacteria</taxon>
        <taxon>Bacillati</taxon>
        <taxon>Actinomycetota</taxon>
        <taxon>Actinomycetes</taxon>
        <taxon>Kitasatosporales</taxon>
        <taxon>Streptomycetaceae</taxon>
        <taxon>Streptomyces</taxon>
        <taxon>Streptomyces albidoflavus group</taxon>
    </lineage>
</organism>
<proteinExistence type="evidence at transcript level"/>
<keyword id="KW-0963">Cytoplasm</keyword>
<keyword id="KW-0378">Hydrolase</keyword>
<keyword id="KW-0645">Protease</keyword>
<keyword id="KW-1185">Reference proteome</keyword>
<keyword id="KW-0720">Serine protease</keyword>
<reference key="1">
    <citation type="journal article" date="1999" name="Mol. Microbiol.">
        <title>Alteration of the synthesis of the Clp ATP-dependent protease affects morphological and physiological differentiation in Streptomyces.</title>
        <authorList>
            <person name="de Crecy-Lagard V."/>
            <person name="Servant-Moisson P."/>
            <person name="Viala J."/>
            <person name="Grandvalet C."/>
            <person name="Mazodier P."/>
        </authorList>
    </citation>
    <scope>NUCLEOTIDE SEQUENCE [GENOMIC DNA]</scope>
    <source>
        <strain>ATCC BAA-471 / A3(2) / M145</strain>
    </source>
</reference>
<reference key="2">
    <citation type="journal article" date="2002" name="Nature">
        <title>Complete genome sequence of the model actinomycete Streptomyces coelicolor A3(2).</title>
        <authorList>
            <person name="Bentley S.D."/>
            <person name="Chater K.F."/>
            <person name="Cerdeno-Tarraga A.-M."/>
            <person name="Challis G.L."/>
            <person name="Thomson N.R."/>
            <person name="James K.D."/>
            <person name="Harris D.E."/>
            <person name="Quail M.A."/>
            <person name="Kieser H."/>
            <person name="Harper D."/>
            <person name="Bateman A."/>
            <person name="Brown S."/>
            <person name="Chandra G."/>
            <person name="Chen C.W."/>
            <person name="Collins M."/>
            <person name="Cronin A."/>
            <person name="Fraser A."/>
            <person name="Goble A."/>
            <person name="Hidalgo J."/>
            <person name="Hornsby T."/>
            <person name="Howarth S."/>
            <person name="Huang C.-H."/>
            <person name="Kieser T."/>
            <person name="Larke L."/>
            <person name="Murphy L.D."/>
            <person name="Oliver K."/>
            <person name="O'Neil S."/>
            <person name="Rabbinowitsch E."/>
            <person name="Rajandream M.A."/>
            <person name="Rutherford K.M."/>
            <person name="Rutter S."/>
            <person name="Seeger K."/>
            <person name="Saunders D."/>
            <person name="Sharp S."/>
            <person name="Squares R."/>
            <person name="Squares S."/>
            <person name="Taylor K."/>
            <person name="Warren T."/>
            <person name="Wietzorrek A."/>
            <person name="Woodward J.R."/>
            <person name="Barrell B.G."/>
            <person name="Parkhill J."/>
            <person name="Hopwood D.A."/>
        </authorList>
    </citation>
    <scope>NUCLEOTIDE SEQUENCE [LARGE SCALE GENOMIC DNA]</scope>
    <source>
        <strain>ATCC BAA-471 / A3(2) / M145</strain>
    </source>
</reference>
<reference key="3">
    <citation type="journal article" date="2009" name="Mol. Microbiol.">
        <title>Positive and negative feedback regulatory loops of thiol-oxidative stress response mediated by an unstable isoform of sigmaR in actinomycetes.</title>
        <authorList>
            <person name="Kim M.S."/>
            <person name="Hahn M.Y."/>
            <person name="Cho Y."/>
            <person name="Cho S.N."/>
            <person name="Roe J.H."/>
        </authorList>
    </citation>
    <scope>FUNCTION</scope>
    <scope>INDUCTION</scope>
    <scope>DISRUPTION PHENOTYPE</scope>
    <source>
        <strain>ATCC BAA-471 / A3(2) / M145</strain>
    </source>
</reference>
<name>CLPP1_STRCO</name>
<sequence length="219" mass="23229">MRRPGAVVRRAGGYVTNLMPSAAGEPSIGGGLGDQVYNRLLGERIIFLGQPVDDDIANKITAQLLLLASDPDKDIFLYINSPGGSITAGMAIYDTMQYIKNDVVTIAMGLAASMGQFLLSAGTPGKRFALPNAEILIHQPSAGLAGSASDIKIHAERLLHTKRRMAELTSQHTGQTIEQITRDSDRDRWFDAFEAKEYGLIDDVIATAAGMPGGGGTGA</sequence>
<accession>Q9F315</accession>
<accession>Q9ZH59</accession>
<comment type="function">
    <text evidence="1 2">Cleaves peptides in various proteins in a process that requires ATP hydrolysis. Has a chymotrypsin-like activity. Plays a major role in the degradation of misfolded proteins (By similarity). Probably partially responsible for degradation of ECF sigma factor SigR prime.</text>
</comment>
<comment type="catalytic activity">
    <reaction evidence="1">
        <text>Hydrolysis of proteins to small peptides in the presence of ATP and magnesium. alpha-casein is the usual test substrate. In the absence of ATP, only oligopeptides shorter than five residues are hydrolyzed (such as succinyl-Leu-Tyr-|-NHMec, and Leu-Tyr-Leu-|-Tyr-Trp, in which cleavage of the -Tyr-|-Leu- and -Tyr-|-Trp bonds also occurs).</text>
        <dbReference type="EC" id="3.4.21.92"/>
    </reaction>
</comment>
<comment type="subunit">
    <text evidence="1">Fourteen ClpP subunits assemble into 2 heptameric rings which stack back to back to give a disk-like structure with a central cavity, resembling the structure of eukaryotic proteasomes.</text>
</comment>
<comment type="subcellular location">
    <subcellularLocation>
        <location evidence="1">Cytoplasm</location>
    </subcellularLocation>
</comment>
<comment type="induction">
    <text evidence="2">Expressed from 2 promoters, 1 of which (clpP2) is positively regulated by the thio-oxidizing agent diamide, probably via SigR. Probably a clpP1-clpP2 operon.</text>
</comment>
<comment type="disruption phenotype">
    <text evidence="2">A double clpP1-clpP2 deletion increases the stability of ECF sigma factor SigR prime from 10 to 23 minutes.</text>
</comment>
<comment type="similarity">
    <text evidence="1">Belongs to the peptidase S14 family.</text>
</comment>
<protein>
    <recommendedName>
        <fullName evidence="1">ATP-dependent Clp protease proteolytic subunit 1</fullName>
        <ecNumber evidence="1">3.4.21.92</ecNumber>
    </recommendedName>
    <alternativeName>
        <fullName evidence="1">Endopeptidase Clp 1</fullName>
    </alternativeName>
</protein>
<evidence type="ECO:0000255" key="1">
    <source>
        <dbReference type="HAMAP-Rule" id="MF_00444"/>
    </source>
</evidence>
<evidence type="ECO:0000269" key="2">
    <source>
    </source>
</evidence>
<evidence type="ECO:0000305" key="3"/>
<feature type="chain" id="PRO_0000179664" description="ATP-dependent Clp protease proteolytic subunit 1">
    <location>
        <begin position="1"/>
        <end position="219"/>
    </location>
</feature>
<feature type="active site" description="Nucleophile" evidence="1">
    <location>
        <position position="113"/>
    </location>
</feature>
<feature type="active site" evidence="1">
    <location>
        <position position="138"/>
    </location>
</feature>
<feature type="sequence conflict" description="In Ref. 1; AAC70947." evidence="3" ref="1">
    <original>GKR</original>
    <variation>RQ</variation>
    <location>
        <begin position="125"/>
        <end position="127"/>
    </location>
</feature>